<gene>
    <name type="primary">cyaB</name>
</gene>
<accession>P50653</accession>
<protein>
    <recommendedName>
        <fullName>Ubiquinol oxidase subunit 2</fullName>
        <ecNumber>1.10.3.-</ecNumber>
    </recommendedName>
    <alternativeName>
        <fullName>Cytochrome A1 subunit 2</fullName>
    </alternativeName>
    <alternativeName>
        <fullName>Oxidase BA(3) subunit 2</fullName>
    </alternativeName>
    <alternativeName>
        <fullName>Ubiquinol oxidase polypeptide II</fullName>
    </alternativeName>
</protein>
<sequence length="307" mass="33921">MKNKLLARVARLGGLSSALLLAGCELDVLDPKGPVGEGVKTLIATSTVAMLIVVIPTILETLLFAWQYRQSNTSAEYLPKWCHSNKIEVTIWGVPSLIILFLAVITYQTCHSLDPYKPLEAEANTKPLHVEVVALDWKWLFIYPEQGIATVNQLAIPVNTPIDFNITSDSVMNSFFIPRLGSMIYAMAGMQTQLHLLASEPGDYLGESANYSGRGFSDMKFHTLAVSGDEFNAWVEKVKSSSEQLDSQTYPKLAAPSENPVEYFAHVEPGMFNTIVAKYNNGMVMDKSTGKMIQVQQSAMSDMNMKE</sequence>
<dbReference type="EC" id="1.10.3.-"/>
<dbReference type="EMBL" id="D13185">
    <property type="protein sequence ID" value="BAA02480.1"/>
    <property type="molecule type" value="Genomic_DNA"/>
</dbReference>
<dbReference type="PIR" id="A36885">
    <property type="entry name" value="A36885"/>
</dbReference>
<dbReference type="SMR" id="P50653"/>
<dbReference type="STRING" id="435.A0U92_12080"/>
<dbReference type="GO" id="GO:0005886">
    <property type="term" value="C:plasma membrane"/>
    <property type="evidence" value="ECO:0007669"/>
    <property type="project" value="UniProtKB-SubCell"/>
</dbReference>
<dbReference type="GO" id="GO:0005507">
    <property type="term" value="F:copper ion binding"/>
    <property type="evidence" value="ECO:0007669"/>
    <property type="project" value="InterPro"/>
</dbReference>
<dbReference type="GO" id="GO:0009486">
    <property type="term" value="F:cytochrome bo3 ubiquinol oxidase activity"/>
    <property type="evidence" value="ECO:0007669"/>
    <property type="project" value="InterPro"/>
</dbReference>
<dbReference type="GO" id="GO:0004129">
    <property type="term" value="F:cytochrome-c oxidase activity"/>
    <property type="evidence" value="ECO:0007669"/>
    <property type="project" value="InterPro"/>
</dbReference>
<dbReference type="GO" id="GO:0016682">
    <property type="term" value="F:oxidoreductase activity, acting on diphenols and related substances as donors, oxygen as acceptor"/>
    <property type="evidence" value="ECO:0007669"/>
    <property type="project" value="InterPro"/>
</dbReference>
<dbReference type="GO" id="GO:0042773">
    <property type="term" value="P:ATP synthesis coupled electron transport"/>
    <property type="evidence" value="ECO:0007669"/>
    <property type="project" value="TreeGrafter"/>
</dbReference>
<dbReference type="CDD" id="cd04212">
    <property type="entry name" value="CuRO_UO_II"/>
    <property type="match status" value="1"/>
</dbReference>
<dbReference type="Gene3D" id="1.10.287.90">
    <property type="match status" value="1"/>
</dbReference>
<dbReference type="Gene3D" id="2.60.40.420">
    <property type="entry name" value="Cupredoxins - blue copper proteins"/>
    <property type="match status" value="1"/>
</dbReference>
<dbReference type="InterPro" id="IPR045187">
    <property type="entry name" value="CcO_II"/>
</dbReference>
<dbReference type="InterPro" id="IPR002429">
    <property type="entry name" value="CcO_II-like_C"/>
</dbReference>
<dbReference type="InterPro" id="IPR010514">
    <property type="entry name" value="COX_ARM"/>
</dbReference>
<dbReference type="InterPro" id="IPR008972">
    <property type="entry name" value="Cupredoxin"/>
</dbReference>
<dbReference type="InterPro" id="IPR034227">
    <property type="entry name" value="CuRO_UO_II"/>
</dbReference>
<dbReference type="InterPro" id="IPR011759">
    <property type="entry name" value="Cyt_c_oxidase_su2_TM_dom"/>
</dbReference>
<dbReference type="InterPro" id="IPR036257">
    <property type="entry name" value="Cyt_c_oxidase_su2_TM_sf"/>
</dbReference>
<dbReference type="InterPro" id="IPR006333">
    <property type="entry name" value="Cyt_o_ubiquinol_oxidase_su2"/>
</dbReference>
<dbReference type="NCBIfam" id="TIGR01433">
    <property type="entry name" value="CyoA"/>
    <property type="match status" value="1"/>
</dbReference>
<dbReference type="PANTHER" id="PTHR22888:SF18">
    <property type="entry name" value="CYTOCHROME BO(3) UBIQUINOL OXIDASE SUBUNIT 2"/>
    <property type="match status" value="1"/>
</dbReference>
<dbReference type="PANTHER" id="PTHR22888">
    <property type="entry name" value="CYTOCHROME C OXIDASE, SUBUNIT II"/>
    <property type="match status" value="1"/>
</dbReference>
<dbReference type="Pfam" id="PF00116">
    <property type="entry name" value="COX2"/>
    <property type="match status" value="1"/>
</dbReference>
<dbReference type="Pfam" id="PF06481">
    <property type="entry name" value="COX_ARM"/>
    <property type="match status" value="1"/>
</dbReference>
<dbReference type="PIRSF" id="PIRSF000292">
    <property type="entry name" value="Ubi_od_II"/>
    <property type="match status" value="1"/>
</dbReference>
<dbReference type="SUPFAM" id="SSF49503">
    <property type="entry name" value="Cupredoxins"/>
    <property type="match status" value="1"/>
</dbReference>
<dbReference type="SUPFAM" id="SSF81464">
    <property type="entry name" value="Cytochrome c oxidase subunit II-like, transmembrane region"/>
    <property type="match status" value="1"/>
</dbReference>
<dbReference type="PROSITE" id="PS50857">
    <property type="entry name" value="COX2_CUA"/>
    <property type="match status" value="1"/>
</dbReference>
<dbReference type="PROSITE" id="PS50999">
    <property type="entry name" value="COX2_TM"/>
    <property type="match status" value="1"/>
</dbReference>
<dbReference type="PROSITE" id="PS51257">
    <property type="entry name" value="PROKAR_LIPOPROTEIN"/>
    <property type="match status" value="1"/>
</dbReference>
<proteinExistence type="inferred from homology"/>
<name>QOX2_ACEAC</name>
<reference key="1">
    <citation type="journal article" date="1993" name="J. Bacteriol.">
        <title>Characterization of a cytochrome a1 that functions as a ubiquinol oxidase in Acetobacter aceti.</title>
        <authorList>
            <person name="Fukaya M."/>
            <person name="Tayama K."/>
            <person name="Tamaki T."/>
            <person name="Ebisuya H."/>
            <person name="Okumura H."/>
            <person name="Kawamura Y."/>
            <person name="Horinouchi S."/>
            <person name="Beppu T."/>
        </authorList>
    </citation>
    <scope>NUCLEOTIDE SEQUENCE [GENOMIC DNA]</scope>
    <source>
        <strain>1023</strain>
    </source>
</reference>
<evidence type="ECO:0000255" key="1"/>
<evidence type="ECO:0000255" key="2">
    <source>
        <dbReference type="PROSITE-ProRule" id="PRU00303"/>
    </source>
</evidence>
<evidence type="ECO:0000305" key="3"/>
<comment type="subunit">
    <text>Heterotetramer of the subunits 1, 2, 3 and 4.</text>
</comment>
<comment type="subcellular location">
    <subcellularLocation>
        <location>Cell membrane</location>
        <topology>Multi-pass membrane protein</topology>
    </subcellularLocation>
</comment>
<comment type="similarity">
    <text evidence="3">Belongs to the cytochrome c oxidase subunit 2 family.</text>
</comment>
<feature type="signal peptide" evidence="2">
    <location>
        <begin position="1"/>
        <end position="23"/>
    </location>
</feature>
<feature type="chain" id="PRO_0000006070" description="Ubiquinol oxidase subunit 2">
    <location>
        <begin position="24"/>
        <end position="307"/>
    </location>
</feature>
<feature type="transmembrane region" description="Helical" evidence="1">
    <location>
        <begin position="46"/>
        <end position="66"/>
    </location>
</feature>
<feature type="transmembrane region" description="Helical" evidence="1">
    <location>
        <begin position="87"/>
        <end position="107"/>
    </location>
</feature>
<feature type="lipid moiety-binding region" description="N-palmitoyl cysteine" evidence="2">
    <location>
        <position position="24"/>
    </location>
</feature>
<feature type="lipid moiety-binding region" description="S-diacylglycerol cysteine" evidence="2">
    <location>
        <position position="24"/>
    </location>
</feature>
<keyword id="KW-1003">Cell membrane</keyword>
<keyword id="KW-0249">Electron transport</keyword>
<keyword id="KW-0449">Lipoprotein</keyword>
<keyword id="KW-0472">Membrane</keyword>
<keyword id="KW-0560">Oxidoreductase</keyword>
<keyword id="KW-0564">Palmitate</keyword>
<keyword id="KW-0679">Respiratory chain</keyword>
<keyword id="KW-0732">Signal</keyword>
<keyword id="KW-0812">Transmembrane</keyword>
<keyword id="KW-1133">Transmembrane helix</keyword>
<keyword id="KW-0813">Transport</keyword>
<organism>
    <name type="scientific">Acetobacter aceti</name>
    <dbReference type="NCBI Taxonomy" id="435"/>
    <lineage>
        <taxon>Bacteria</taxon>
        <taxon>Pseudomonadati</taxon>
        <taxon>Pseudomonadota</taxon>
        <taxon>Alphaproteobacteria</taxon>
        <taxon>Acetobacterales</taxon>
        <taxon>Acetobacteraceae</taxon>
        <taxon>Acetobacter</taxon>
        <taxon>Acetobacter subgen. Acetobacter</taxon>
    </lineage>
</organism>